<accession>A6WYS5</accession>
<dbReference type="EC" id="3.4.11.19" evidence="1"/>
<dbReference type="EMBL" id="CP000758">
    <property type="protein sequence ID" value="ABS14129.1"/>
    <property type="molecule type" value="Genomic_DNA"/>
</dbReference>
<dbReference type="RefSeq" id="WP_012091479.1">
    <property type="nucleotide sequence ID" value="NC_009667.1"/>
</dbReference>
<dbReference type="SMR" id="A6WYS5"/>
<dbReference type="STRING" id="439375.Oant_1412"/>
<dbReference type="MEROPS" id="S12.002"/>
<dbReference type="KEGG" id="oan:Oant_1412"/>
<dbReference type="PATRIC" id="fig|439375.7.peg.1481"/>
<dbReference type="eggNOG" id="COG1680">
    <property type="taxonomic scope" value="Bacteria"/>
</dbReference>
<dbReference type="HOGENOM" id="CLU_020027_0_4_5"/>
<dbReference type="PhylomeDB" id="A6WYS5"/>
<dbReference type="Proteomes" id="UP000002301">
    <property type="component" value="Chromosome 1"/>
</dbReference>
<dbReference type="GO" id="GO:0004177">
    <property type="term" value="F:aminopeptidase activity"/>
    <property type="evidence" value="ECO:0007669"/>
    <property type="project" value="UniProtKB-UniRule"/>
</dbReference>
<dbReference type="GO" id="GO:0006508">
    <property type="term" value="P:proteolysis"/>
    <property type="evidence" value="ECO:0007669"/>
    <property type="project" value="UniProtKB-KW"/>
</dbReference>
<dbReference type="Gene3D" id="2.40.128.50">
    <property type="match status" value="2"/>
</dbReference>
<dbReference type="Gene3D" id="3.40.710.10">
    <property type="entry name" value="DD-peptidase/beta-lactamase superfamily"/>
    <property type="match status" value="1"/>
</dbReference>
<dbReference type="HAMAP" id="MF_01960">
    <property type="entry name" value="D_aminopeptidase"/>
    <property type="match status" value="1"/>
</dbReference>
<dbReference type="InterPro" id="IPR050491">
    <property type="entry name" value="Bact_CellWall_Synth/Modif"/>
</dbReference>
<dbReference type="InterPro" id="IPR001466">
    <property type="entry name" value="Beta-lactam-related"/>
</dbReference>
<dbReference type="InterPro" id="IPR012338">
    <property type="entry name" value="Beta-lactam/transpept-like"/>
</dbReference>
<dbReference type="InterPro" id="IPR027279">
    <property type="entry name" value="D_amino_pept/lipop_sf"/>
</dbReference>
<dbReference type="InterPro" id="IPR023645">
    <property type="entry name" value="DAP"/>
</dbReference>
<dbReference type="InterPro" id="IPR012856">
    <property type="entry name" value="DAP_B_dom"/>
</dbReference>
<dbReference type="NCBIfam" id="NF009622">
    <property type="entry name" value="PRK13128.1"/>
    <property type="match status" value="1"/>
</dbReference>
<dbReference type="PANTHER" id="PTHR46825:SF9">
    <property type="entry name" value="BETA-LACTAMASE-RELATED DOMAIN-CONTAINING PROTEIN"/>
    <property type="match status" value="1"/>
</dbReference>
<dbReference type="PANTHER" id="PTHR46825">
    <property type="entry name" value="D-ALANYL-D-ALANINE-CARBOXYPEPTIDASE/ENDOPEPTIDASE AMPH"/>
    <property type="match status" value="1"/>
</dbReference>
<dbReference type="Pfam" id="PF00144">
    <property type="entry name" value="Beta-lactamase"/>
    <property type="match status" value="1"/>
</dbReference>
<dbReference type="Pfam" id="PF07930">
    <property type="entry name" value="DAP_B"/>
    <property type="match status" value="1"/>
</dbReference>
<dbReference type="SUPFAM" id="SSF56601">
    <property type="entry name" value="beta-lactamase/transpeptidase-like"/>
    <property type="match status" value="1"/>
</dbReference>
<dbReference type="SUPFAM" id="SSF50886">
    <property type="entry name" value="D-aminopeptidase, middle and C-terminal domains"/>
    <property type="match status" value="2"/>
</dbReference>
<name>DAP_BRUA4</name>
<keyword id="KW-0031">Aminopeptidase</keyword>
<keyword id="KW-0378">Hydrolase</keyword>
<keyword id="KW-0645">Protease</keyword>
<keyword id="KW-1185">Reference proteome</keyword>
<sequence length="520" mass="57486">MSKFDLSALETFVRTIPQHYKGPGGAVAVLKDGKVVLRHAWGFADLSTRKAMTPETRMPICSVSKQFTCAVLLDSVGEPEVLDDALAAYLDKFAEKRPSVRDLCNNQSGLRDYWALTVLCGADPEGVFLPEQAQSLLRRLKTTHFAPGTHYSYCNGNFRILADLIEQHTGRSLIELLSERIFQPAGMKTAELIPDTALFDECTGYEGDTVRGFLPAVNRIHWMGDAGICASLDDMIAWEQFIDATRDDESGIYRRLSGLQTFSDGAAAPYGLGLKFEETGGKRLTGHGGALRGWRCQRWHCADERLSTIAMFNFEGGASDVAFKLMNIALGVPTSEQVRVAADAVWFGSWLDHETGLVLSLEDAGRGRMKARFGTGPEMMDVVGENEARSSMTAIRRDGDTIHLAREDENLSLTMQRLKGAAKQDIAGHYRSDELEADLLIVDEGGAFYGAFEGFLGKSDMYSLYEAGPDVWLLPVQRSMDAPSPGEWKLVFHRDAKGEITGMTVGCWLARHVDYRRIQE</sequence>
<protein>
    <recommendedName>
        <fullName evidence="1">D-aminopeptidase</fullName>
        <ecNumber evidence="1">3.4.11.19</ecNumber>
    </recommendedName>
</protein>
<gene>
    <name evidence="1" type="primary">dap</name>
    <name type="ordered locus">Oant_1412</name>
</gene>
<proteinExistence type="inferred from homology"/>
<feature type="chain" id="PRO_1000070874" description="D-aminopeptidase">
    <location>
        <begin position="1"/>
        <end position="520"/>
    </location>
</feature>
<feature type="region of interest" description="Important for specificity" evidence="1">
    <location>
        <begin position="477"/>
        <end position="487"/>
    </location>
</feature>
<feature type="active site" description="Nucleophile" evidence="1">
    <location>
        <position position="62"/>
    </location>
</feature>
<feature type="active site" description="Proton donor/acceptor" evidence="1">
    <location>
        <position position="65"/>
    </location>
</feature>
<feature type="binding site" evidence="1">
    <location>
        <position position="481"/>
    </location>
    <ligand>
        <name>substrate</name>
    </ligand>
</feature>
<organism>
    <name type="scientific">Brucella anthropi (strain ATCC 49188 / DSM 6882 / CCUG 24695 / JCM 21032 / LMG 3331 / NBRC 15819 / NCTC 12168 / Alc 37)</name>
    <name type="common">Ochrobactrum anthropi</name>
    <dbReference type="NCBI Taxonomy" id="439375"/>
    <lineage>
        <taxon>Bacteria</taxon>
        <taxon>Pseudomonadati</taxon>
        <taxon>Pseudomonadota</taxon>
        <taxon>Alphaproteobacteria</taxon>
        <taxon>Hyphomicrobiales</taxon>
        <taxon>Brucellaceae</taxon>
        <taxon>Brucella/Ochrobactrum group</taxon>
        <taxon>Brucella</taxon>
    </lineage>
</organism>
<comment type="function">
    <text evidence="1">Hydrolyzes N-terminal residues in D-amino acid-containing peptides.</text>
</comment>
<comment type="catalytic activity">
    <reaction evidence="1">
        <text>Release of an N-terminal D-amino acid from a peptide, Xaa-|-Yaa-, in which Xaa is preferably D-Ala, D-Ser or D-Thr. D-amino acid amides and methyl esters also are hydrolyzed, as is glycine amide.</text>
        <dbReference type="EC" id="3.4.11.19"/>
    </reaction>
</comment>
<comment type="activity regulation">
    <text evidence="1">Inhibited by beta-lactam compounds such as 6-aminopenicillic acid, 7-aminocephalosporanic acid, benzylpenicillin and ampicillin. Inhibited by p-chloromercuribenzoate.</text>
</comment>
<comment type="subunit">
    <text evidence="1">Homodimer.</text>
</comment>
<comment type="similarity">
    <text evidence="1">Belongs to the peptidase S12 family.</text>
</comment>
<evidence type="ECO:0000255" key="1">
    <source>
        <dbReference type="HAMAP-Rule" id="MF_01960"/>
    </source>
</evidence>
<reference key="1">
    <citation type="journal article" date="2011" name="J. Bacteriol.">
        <title>Genome of Ochrobactrum anthropi ATCC 49188 T, a versatile opportunistic pathogen and symbiont of several eukaryotic hosts.</title>
        <authorList>
            <person name="Chain P.S."/>
            <person name="Lang D.M."/>
            <person name="Comerci D.J."/>
            <person name="Malfatti S.A."/>
            <person name="Vergez L.M."/>
            <person name="Shin M."/>
            <person name="Ugalde R.A."/>
            <person name="Garcia E."/>
            <person name="Tolmasky M.E."/>
        </authorList>
    </citation>
    <scope>NUCLEOTIDE SEQUENCE [LARGE SCALE GENOMIC DNA]</scope>
    <source>
        <strain>ATCC 49188 / DSM 6882 / CCUG 24695 / JCM 21032 / LMG 3331 / NBRC 15819 / NCTC 12168 / Alc 37</strain>
    </source>
</reference>